<feature type="chain" id="PRO_0000295108" description="Zinc finger protein PLAG1">
    <location>
        <begin position="1"/>
        <end position="499"/>
    </location>
</feature>
<feature type="zinc finger region" description="C2H2-type 1" evidence="2">
    <location>
        <begin position="34"/>
        <end position="56"/>
    </location>
</feature>
<feature type="zinc finger region" description="C2H2-type 2" evidence="2">
    <location>
        <begin position="62"/>
        <end position="86"/>
    </location>
</feature>
<feature type="zinc finger region" description="C2H2-type 3" evidence="2">
    <location>
        <begin position="92"/>
        <end position="114"/>
    </location>
</feature>
<feature type="zinc finger region" description="C2H2-type 4" evidence="2">
    <location>
        <begin position="121"/>
        <end position="143"/>
    </location>
</feature>
<feature type="zinc finger region" description="C2H2-type 5" evidence="2">
    <location>
        <begin position="150"/>
        <end position="172"/>
    </location>
</feature>
<feature type="zinc finger region" description="C2H2-type 6" evidence="2">
    <location>
        <begin position="185"/>
        <end position="207"/>
    </location>
</feature>
<feature type="zinc finger region" description="C2H2-type 7" evidence="2">
    <location>
        <begin position="213"/>
        <end position="236"/>
    </location>
</feature>
<feature type="region of interest" description="Disordered" evidence="3">
    <location>
        <begin position="1"/>
        <end position="33"/>
    </location>
</feature>
<feature type="region of interest" description="Interaction with KPNA2" evidence="1">
    <location>
        <begin position="2"/>
        <end position="84"/>
    </location>
</feature>
<feature type="region of interest" description="Decreased nuclear import with localization in the nucleus but also in the cytoplasm" evidence="1">
    <location>
        <begin position="41"/>
        <end position="242"/>
    </location>
</feature>
<feature type="region of interest" description="Activates transcription; Inhibition of nuclear import due to lack of NLS and KPNA2 interaction" evidence="1">
    <location>
        <begin position="243"/>
        <end position="499"/>
    </location>
</feature>
<feature type="region of interest" description="Repression domain; contains 3 sumoylation motifs and massively decrease transcription activity" evidence="1">
    <location>
        <begin position="243"/>
        <end position="383"/>
    </location>
</feature>
<feature type="region of interest" description="Disordered" evidence="3">
    <location>
        <begin position="365"/>
        <end position="400"/>
    </location>
</feature>
<feature type="region of interest" description="Massively activates transcription" evidence="1">
    <location>
        <begin position="384"/>
        <end position="499"/>
    </location>
</feature>
<feature type="short sequence motif" description="Nuclear localization signal" evidence="1">
    <location>
        <begin position="22"/>
        <end position="25"/>
    </location>
</feature>
<feature type="compositionally biased region" description="Low complexity" evidence="3">
    <location>
        <begin position="365"/>
        <end position="379"/>
    </location>
</feature>
<feature type="cross-link" description="Glycyl lysine isopeptide (Lys-Gly) (interchain with G-Cter in SUMO)" evidence="1">
    <location>
        <position position="244"/>
    </location>
</feature>
<feature type="cross-link" description="Glycyl lysine isopeptide (Lys-Gly) (interchain with G-Cter in SUMO)" evidence="1">
    <location>
        <position position="263"/>
    </location>
</feature>
<feature type="sequence conflict" description="In Ref. 1; AAS86161 and 2; AAF21762." evidence="9" ref="1 2">
    <original>P</original>
    <variation>T</variation>
    <location>
        <position position="433"/>
    </location>
</feature>
<gene>
    <name type="primary">Plag1</name>
</gene>
<accession>Q9QYE0</accession>
<accession>B1AXC4</accession>
<accession>Q3UXC0</accession>
<keyword id="KW-0007">Acetylation</keyword>
<keyword id="KW-0010">Activator</keyword>
<keyword id="KW-0238">DNA-binding</keyword>
<keyword id="KW-1017">Isopeptide bond</keyword>
<keyword id="KW-0479">Metal-binding</keyword>
<keyword id="KW-0539">Nucleus</keyword>
<keyword id="KW-0656">Proto-oncogene</keyword>
<keyword id="KW-1185">Reference proteome</keyword>
<keyword id="KW-0677">Repeat</keyword>
<keyword id="KW-0804">Transcription</keyword>
<keyword id="KW-0805">Transcription regulation</keyword>
<keyword id="KW-0832">Ubl conjugation</keyword>
<keyword id="KW-0862">Zinc</keyword>
<keyword id="KW-0863">Zinc-finger</keyword>
<dbReference type="EMBL" id="AY574219">
    <property type="protein sequence ID" value="AAS86161.1"/>
    <property type="molecule type" value="mRNA"/>
</dbReference>
<dbReference type="EMBL" id="AF057366">
    <property type="protein sequence ID" value="AAF21762.1"/>
    <property type="molecule type" value="mRNA"/>
</dbReference>
<dbReference type="EMBL" id="BC139283">
    <property type="protein sequence ID" value="AAI39284.1"/>
    <property type="molecule type" value="mRNA"/>
</dbReference>
<dbReference type="EMBL" id="BC139285">
    <property type="protein sequence ID" value="AAI39286.1"/>
    <property type="molecule type" value="mRNA"/>
</dbReference>
<dbReference type="EMBL" id="AL807387">
    <property type="status" value="NOT_ANNOTATED_CDS"/>
    <property type="molecule type" value="Genomic_DNA"/>
</dbReference>
<dbReference type="EMBL" id="CH466538">
    <property type="protein sequence ID" value="EDL05712.1"/>
    <property type="molecule type" value="Genomic_DNA"/>
</dbReference>
<dbReference type="EMBL" id="AK135759">
    <property type="protein sequence ID" value="BAE22643.1"/>
    <property type="status" value="ALT_INIT"/>
    <property type="molecule type" value="mRNA"/>
</dbReference>
<dbReference type="CCDS" id="CCDS17941.1"/>
<dbReference type="RefSeq" id="NP_064353.2">
    <property type="nucleotide sequence ID" value="NM_019969.3"/>
</dbReference>
<dbReference type="RefSeq" id="XP_006538179.1">
    <property type="nucleotide sequence ID" value="XM_006538116.5"/>
</dbReference>
<dbReference type="RefSeq" id="XP_011248381.1">
    <property type="nucleotide sequence ID" value="XM_011250079.2"/>
</dbReference>
<dbReference type="RefSeq" id="XP_017175819.1">
    <property type="nucleotide sequence ID" value="XM_017320330.1"/>
</dbReference>
<dbReference type="RefSeq" id="XP_017175820.1">
    <property type="nucleotide sequence ID" value="XM_017320331.3"/>
</dbReference>
<dbReference type="RefSeq" id="XP_036020162.1">
    <property type="nucleotide sequence ID" value="XM_036164269.1"/>
</dbReference>
<dbReference type="RefSeq" id="XP_036020163.1">
    <property type="nucleotide sequence ID" value="XM_036164270.1"/>
</dbReference>
<dbReference type="SMR" id="Q9QYE0"/>
<dbReference type="FunCoup" id="Q9QYE0">
    <property type="interactions" value="1694"/>
</dbReference>
<dbReference type="STRING" id="10090.ENSMUSP00000003369"/>
<dbReference type="PhosphoSitePlus" id="Q9QYE0"/>
<dbReference type="PaxDb" id="10090-ENSMUSP00000003369"/>
<dbReference type="Antibodypedia" id="1454">
    <property type="antibodies" value="243 antibodies from 26 providers"/>
</dbReference>
<dbReference type="DNASU" id="56711"/>
<dbReference type="Ensembl" id="ENSMUST00000003369.10">
    <property type="protein sequence ID" value="ENSMUSP00000003369.4"/>
    <property type="gene ID" value="ENSMUSG00000003282.10"/>
</dbReference>
<dbReference type="GeneID" id="56711"/>
<dbReference type="KEGG" id="mmu:56711"/>
<dbReference type="UCSC" id="uc008rwp.2">
    <property type="organism name" value="mouse"/>
</dbReference>
<dbReference type="AGR" id="MGI:1891916"/>
<dbReference type="CTD" id="5324"/>
<dbReference type="MGI" id="MGI:1891916">
    <property type="gene designation" value="Plag1"/>
</dbReference>
<dbReference type="VEuPathDB" id="HostDB:ENSMUSG00000003282"/>
<dbReference type="eggNOG" id="KOG1721">
    <property type="taxonomic scope" value="Eukaryota"/>
</dbReference>
<dbReference type="GeneTree" id="ENSGT00940000159246"/>
<dbReference type="HOGENOM" id="CLU_002678_66_1_1"/>
<dbReference type="InParanoid" id="Q9QYE0"/>
<dbReference type="OMA" id="KEAFACQ"/>
<dbReference type="OrthoDB" id="3533395at2759"/>
<dbReference type="PhylomeDB" id="Q9QYE0"/>
<dbReference type="TreeFam" id="TF332024"/>
<dbReference type="BioGRID-ORCS" id="56711">
    <property type="hits" value="1 hit in 79 CRISPR screens"/>
</dbReference>
<dbReference type="ChiTaRS" id="Plag1">
    <property type="organism name" value="mouse"/>
</dbReference>
<dbReference type="PRO" id="PR:Q9QYE0"/>
<dbReference type="Proteomes" id="UP000000589">
    <property type="component" value="Chromosome 4"/>
</dbReference>
<dbReference type="RNAct" id="Q9QYE0">
    <property type="molecule type" value="protein"/>
</dbReference>
<dbReference type="Bgee" id="ENSMUSG00000003282">
    <property type="expression patterns" value="Expressed in animal zygote and 106 other cell types or tissues"/>
</dbReference>
<dbReference type="ExpressionAtlas" id="Q9QYE0">
    <property type="expression patterns" value="baseline and differential"/>
</dbReference>
<dbReference type="GO" id="GO:0005813">
    <property type="term" value="C:centrosome"/>
    <property type="evidence" value="ECO:0007669"/>
    <property type="project" value="Ensembl"/>
</dbReference>
<dbReference type="GO" id="GO:0005829">
    <property type="term" value="C:cytosol"/>
    <property type="evidence" value="ECO:0007669"/>
    <property type="project" value="Ensembl"/>
</dbReference>
<dbReference type="GO" id="GO:0016607">
    <property type="term" value="C:nuclear speck"/>
    <property type="evidence" value="ECO:0007669"/>
    <property type="project" value="Ensembl"/>
</dbReference>
<dbReference type="GO" id="GO:0001228">
    <property type="term" value="F:DNA-binding transcription activator activity, RNA polymerase II-specific"/>
    <property type="evidence" value="ECO:0007669"/>
    <property type="project" value="Ensembl"/>
</dbReference>
<dbReference type="GO" id="GO:0000978">
    <property type="term" value="F:RNA polymerase II cis-regulatory region sequence-specific DNA binding"/>
    <property type="evidence" value="ECO:0007669"/>
    <property type="project" value="Ensembl"/>
</dbReference>
<dbReference type="GO" id="GO:0008270">
    <property type="term" value="F:zinc ion binding"/>
    <property type="evidence" value="ECO:0007669"/>
    <property type="project" value="UniProtKB-KW"/>
</dbReference>
<dbReference type="GO" id="GO:0022612">
    <property type="term" value="P:gland morphogenesis"/>
    <property type="evidence" value="ECO:0000315"/>
    <property type="project" value="MGI"/>
</dbReference>
<dbReference type="GO" id="GO:0035264">
    <property type="term" value="P:multicellular organism growth"/>
    <property type="evidence" value="ECO:0000315"/>
    <property type="project" value="MGI"/>
</dbReference>
<dbReference type="GO" id="GO:0010629">
    <property type="term" value="P:negative regulation of gene expression"/>
    <property type="evidence" value="ECO:0000314"/>
    <property type="project" value="UniProtKB"/>
</dbReference>
<dbReference type="GO" id="GO:0035265">
    <property type="term" value="P:organ growth"/>
    <property type="evidence" value="ECO:0000315"/>
    <property type="project" value="MGI"/>
</dbReference>
<dbReference type="GO" id="GO:0010628">
    <property type="term" value="P:positive regulation of gene expression"/>
    <property type="evidence" value="ECO:0000314"/>
    <property type="project" value="UniProtKB"/>
</dbReference>
<dbReference type="GO" id="GO:0060252">
    <property type="term" value="P:positive regulation of glial cell proliferation"/>
    <property type="evidence" value="ECO:0000314"/>
    <property type="project" value="UniProtKB"/>
</dbReference>
<dbReference type="GO" id="GO:0060736">
    <property type="term" value="P:prostate gland growth"/>
    <property type="evidence" value="ECO:0000315"/>
    <property type="project" value="MGI"/>
</dbReference>
<dbReference type="FunFam" id="3.30.160.60:FF:000425">
    <property type="entry name" value="PLAG1 like zinc finger 1"/>
    <property type="match status" value="1"/>
</dbReference>
<dbReference type="FunFam" id="3.30.160.60:FF:000231">
    <property type="entry name" value="PLAG1 like zinc finger 2"/>
    <property type="match status" value="1"/>
</dbReference>
<dbReference type="FunFam" id="3.30.160.60:FF:000256">
    <property type="entry name" value="PLAG1 like zinc finger 2"/>
    <property type="match status" value="1"/>
</dbReference>
<dbReference type="FunFam" id="3.30.160.60:FF:001316">
    <property type="entry name" value="PR domain zinc finger protein 10"/>
    <property type="match status" value="1"/>
</dbReference>
<dbReference type="FunFam" id="3.30.160.60:FF:000125">
    <property type="entry name" value="Putative zinc finger protein 143"/>
    <property type="match status" value="1"/>
</dbReference>
<dbReference type="Gene3D" id="3.30.160.60">
    <property type="entry name" value="Classic Zinc Finger"/>
    <property type="match status" value="6"/>
</dbReference>
<dbReference type="InterPro" id="IPR050331">
    <property type="entry name" value="Zinc_finger"/>
</dbReference>
<dbReference type="InterPro" id="IPR036236">
    <property type="entry name" value="Znf_C2H2_sf"/>
</dbReference>
<dbReference type="InterPro" id="IPR013087">
    <property type="entry name" value="Znf_C2H2_type"/>
</dbReference>
<dbReference type="PANTHER" id="PTHR16515:SF23">
    <property type="entry name" value="PLAG1 LIKE ZINC FINGER 1"/>
    <property type="match status" value="1"/>
</dbReference>
<dbReference type="PANTHER" id="PTHR16515">
    <property type="entry name" value="PR DOMAIN ZINC FINGER PROTEIN"/>
    <property type="match status" value="1"/>
</dbReference>
<dbReference type="Pfam" id="PF00096">
    <property type="entry name" value="zf-C2H2"/>
    <property type="match status" value="3"/>
</dbReference>
<dbReference type="Pfam" id="PF13894">
    <property type="entry name" value="zf-C2H2_4"/>
    <property type="match status" value="1"/>
</dbReference>
<dbReference type="SMART" id="SM00355">
    <property type="entry name" value="ZnF_C2H2"/>
    <property type="match status" value="7"/>
</dbReference>
<dbReference type="SUPFAM" id="SSF57667">
    <property type="entry name" value="beta-beta-alpha zinc fingers"/>
    <property type="match status" value="4"/>
</dbReference>
<dbReference type="PROSITE" id="PS00028">
    <property type="entry name" value="ZINC_FINGER_C2H2_1"/>
    <property type="match status" value="7"/>
</dbReference>
<dbReference type="PROSITE" id="PS50157">
    <property type="entry name" value="ZINC_FINGER_C2H2_2"/>
    <property type="match status" value="7"/>
</dbReference>
<proteinExistence type="evidence at transcript level"/>
<sequence>MATVIPGDLSEVRDTQKAPSGKRKRGESKPRKNFPCQLCDKAFNSVEKLKVHSFSHTGERPYKCTHQDCTKAFVSKYKLQRHMATHSPEKTHKCNYCEKMFHRKDHLKNHLHTHDPNKETFKCEECGKSYNTKLGFKRHLALHAATSGDLTCKVCLQNFESTGVLLEHLKSHAGKSSGGVKEKKHQCEHCERRFYTRKDVRRHMVVHTGRKDFLCQYCAQRFGRKDHLTRHMKKSHNQELLKVKTEPVDFLDPFTCNMSVPIKDELLPVMSLPSSELLSKPFTNTLQLNLYNTPFQSMQSSGSAHQMITTLPLGMTCPIDMDAVHPSHHLAFKCPFSSTSYAISIPEKEQPLKGEIESYLMELQGGAPSSSQDSPASSSKLGLEPQSGSPDDGAGDLSLSKSSISISDPLSTPALDFSQLFNFIPLNGPPYNPLSVGSLGMSYSQEEAHSSVSQLPTQTQDLQDPANTVGLSSLHSLSAAFTSSLSSSTTLPRFHQAFQ</sequence>
<evidence type="ECO:0000250" key="1"/>
<evidence type="ECO:0000255" key="2">
    <source>
        <dbReference type="PROSITE-ProRule" id="PRU00042"/>
    </source>
</evidence>
<evidence type="ECO:0000256" key="3">
    <source>
        <dbReference type="SAM" id="MobiDB-lite"/>
    </source>
</evidence>
<evidence type="ECO:0000269" key="4">
    <source>
    </source>
</evidence>
<evidence type="ECO:0000269" key="5">
    <source>
    </source>
</evidence>
<evidence type="ECO:0000269" key="6">
    <source>
    </source>
</evidence>
<evidence type="ECO:0000269" key="7">
    <source>
    </source>
</evidence>
<evidence type="ECO:0000269" key="8">
    <source>
    </source>
</evidence>
<evidence type="ECO:0000305" key="9"/>
<protein>
    <recommendedName>
        <fullName>Zinc finger protein PLAG1</fullName>
    </recommendedName>
    <alternativeName>
        <fullName>Pleiomorphic adenoma gene 1 protein</fullName>
    </alternativeName>
</protein>
<name>PLAG1_MOUSE</name>
<organism>
    <name type="scientific">Mus musculus</name>
    <name type="common">Mouse</name>
    <dbReference type="NCBI Taxonomy" id="10090"/>
    <lineage>
        <taxon>Eukaryota</taxon>
        <taxon>Metazoa</taxon>
        <taxon>Chordata</taxon>
        <taxon>Craniata</taxon>
        <taxon>Vertebrata</taxon>
        <taxon>Euteleostomi</taxon>
        <taxon>Mammalia</taxon>
        <taxon>Eutheria</taxon>
        <taxon>Euarchontoglires</taxon>
        <taxon>Glires</taxon>
        <taxon>Rodentia</taxon>
        <taxon>Myomorpha</taxon>
        <taxon>Muroidea</taxon>
        <taxon>Muridae</taxon>
        <taxon>Murinae</taxon>
        <taxon>Mus</taxon>
        <taxon>Mus</taxon>
    </lineage>
</organism>
<reference key="1">
    <citation type="journal article" date="2005" name="Blood">
        <title>Plag1 and Plagl2 are oncogenes that induce acute myeloid leukemia in cooperation with Cbfb-MYH11.</title>
        <authorList>
            <person name="Landrette S.F."/>
            <person name="Kuo Y.H."/>
            <person name="Hensen K."/>
            <person name="van Doorn-Khosrovani S.B."/>
            <person name="Perrat P.N."/>
            <person name="Van de Ven W.J."/>
            <person name="Delwel R."/>
            <person name="Castilla L.H."/>
        </authorList>
    </citation>
    <scope>NUCLEOTIDE SEQUENCE [MRNA]</scope>
    <source>
        <strain>129/SvEv</strain>
        <tissue>Embryo</tissue>
    </source>
</reference>
<reference key="2">
    <citation type="submission" date="1998-04" db="EMBL/GenBank/DDBJ databases">
        <authorList>
            <person name="Hensen K."/>
            <person name="Voz M.L."/>
            <person name="Van de Ven W.J.M."/>
            <person name="Kas K."/>
        </authorList>
    </citation>
    <scope>NUCLEOTIDE SEQUENCE [MRNA]</scope>
    <source>
        <strain>129/Sv</strain>
    </source>
</reference>
<reference key="3">
    <citation type="journal article" date="2009" name="PLoS Biol.">
        <title>Lineage-specific biology revealed by a finished genome assembly of the mouse.</title>
        <authorList>
            <person name="Church D.M."/>
            <person name="Goodstadt L."/>
            <person name="Hillier L.W."/>
            <person name="Zody M.C."/>
            <person name="Goldstein S."/>
            <person name="She X."/>
            <person name="Bult C.J."/>
            <person name="Agarwala R."/>
            <person name="Cherry J.L."/>
            <person name="DiCuccio M."/>
            <person name="Hlavina W."/>
            <person name="Kapustin Y."/>
            <person name="Meric P."/>
            <person name="Maglott D."/>
            <person name="Birtle Z."/>
            <person name="Marques A.C."/>
            <person name="Graves T."/>
            <person name="Zhou S."/>
            <person name="Teague B."/>
            <person name="Potamousis K."/>
            <person name="Churas C."/>
            <person name="Place M."/>
            <person name="Herschleb J."/>
            <person name="Runnheim R."/>
            <person name="Forrest D."/>
            <person name="Amos-Landgraf J."/>
            <person name="Schwartz D.C."/>
            <person name="Cheng Z."/>
            <person name="Lindblad-Toh K."/>
            <person name="Eichler E.E."/>
            <person name="Ponting C.P."/>
        </authorList>
    </citation>
    <scope>NUCLEOTIDE SEQUENCE [LARGE SCALE GENOMIC DNA]</scope>
    <source>
        <strain>C57BL/6J</strain>
    </source>
</reference>
<reference key="4">
    <citation type="submission" date="2005-09" db="EMBL/GenBank/DDBJ databases">
        <authorList>
            <person name="Mural R.J."/>
            <person name="Adams M.D."/>
            <person name="Myers E.W."/>
            <person name="Smith H.O."/>
            <person name="Venter J.C."/>
        </authorList>
    </citation>
    <scope>NUCLEOTIDE SEQUENCE [LARGE SCALE GENOMIC DNA]</scope>
</reference>
<reference key="5">
    <citation type="journal article" date="2004" name="Genome Res.">
        <title>The status, quality, and expansion of the NIH full-length cDNA project: the Mammalian Gene Collection (MGC).</title>
        <authorList>
            <consortium name="The MGC Project Team"/>
        </authorList>
    </citation>
    <scope>NUCLEOTIDE SEQUENCE [LARGE SCALE MRNA]</scope>
    <source>
        <tissue>Brain</tissue>
    </source>
</reference>
<reference key="6">
    <citation type="journal article" date="2005" name="Science">
        <title>The transcriptional landscape of the mammalian genome.</title>
        <authorList>
            <person name="Carninci P."/>
            <person name="Kasukawa T."/>
            <person name="Katayama S."/>
            <person name="Gough J."/>
            <person name="Frith M.C."/>
            <person name="Maeda N."/>
            <person name="Oyama R."/>
            <person name="Ravasi T."/>
            <person name="Lenhard B."/>
            <person name="Wells C."/>
            <person name="Kodzius R."/>
            <person name="Shimokawa K."/>
            <person name="Bajic V.B."/>
            <person name="Brenner S.E."/>
            <person name="Batalov S."/>
            <person name="Forrest A.R."/>
            <person name="Zavolan M."/>
            <person name="Davis M.J."/>
            <person name="Wilming L.G."/>
            <person name="Aidinis V."/>
            <person name="Allen J.E."/>
            <person name="Ambesi-Impiombato A."/>
            <person name="Apweiler R."/>
            <person name="Aturaliya R.N."/>
            <person name="Bailey T.L."/>
            <person name="Bansal M."/>
            <person name="Baxter L."/>
            <person name="Beisel K.W."/>
            <person name="Bersano T."/>
            <person name="Bono H."/>
            <person name="Chalk A.M."/>
            <person name="Chiu K.P."/>
            <person name="Choudhary V."/>
            <person name="Christoffels A."/>
            <person name="Clutterbuck D.R."/>
            <person name="Crowe M.L."/>
            <person name="Dalla E."/>
            <person name="Dalrymple B.P."/>
            <person name="de Bono B."/>
            <person name="Della Gatta G."/>
            <person name="di Bernardo D."/>
            <person name="Down T."/>
            <person name="Engstrom P."/>
            <person name="Fagiolini M."/>
            <person name="Faulkner G."/>
            <person name="Fletcher C.F."/>
            <person name="Fukushima T."/>
            <person name="Furuno M."/>
            <person name="Futaki S."/>
            <person name="Gariboldi M."/>
            <person name="Georgii-Hemming P."/>
            <person name="Gingeras T.R."/>
            <person name="Gojobori T."/>
            <person name="Green R.E."/>
            <person name="Gustincich S."/>
            <person name="Harbers M."/>
            <person name="Hayashi Y."/>
            <person name="Hensch T.K."/>
            <person name="Hirokawa N."/>
            <person name="Hill D."/>
            <person name="Huminiecki L."/>
            <person name="Iacono M."/>
            <person name="Ikeo K."/>
            <person name="Iwama A."/>
            <person name="Ishikawa T."/>
            <person name="Jakt M."/>
            <person name="Kanapin A."/>
            <person name="Katoh M."/>
            <person name="Kawasawa Y."/>
            <person name="Kelso J."/>
            <person name="Kitamura H."/>
            <person name="Kitano H."/>
            <person name="Kollias G."/>
            <person name="Krishnan S.P."/>
            <person name="Kruger A."/>
            <person name="Kummerfeld S.K."/>
            <person name="Kurochkin I.V."/>
            <person name="Lareau L.F."/>
            <person name="Lazarevic D."/>
            <person name="Lipovich L."/>
            <person name="Liu J."/>
            <person name="Liuni S."/>
            <person name="McWilliam S."/>
            <person name="Madan Babu M."/>
            <person name="Madera M."/>
            <person name="Marchionni L."/>
            <person name="Matsuda H."/>
            <person name="Matsuzawa S."/>
            <person name="Miki H."/>
            <person name="Mignone F."/>
            <person name="Miyake S."/>
            <person name="Morris K."/>
            <person name="Mottagui-Tabar S."/>
            <person name="Mulder N."/>
            <person name="Nakano N."/>
            <person name="Nakauchi H."/>
            <person name="Ng P."/>
            <person name="Nilsson R."/>
            <person name="Nishiguchi S."/>
            <person name="Nishikawa S."/>
            <person name="Nori F."/>
            <person name="Ohara O."/>
            <person name="Okazaki Y."/>
            <person name="Orlando V."/>
            <person name="Pang K.C."/>
            <person name="Pavan W.J."/>
            <person name="Pavesi G."/>
            <person name="Pesole G."/>
            <person name="Petrovsky N."/>
            <person name="Piazza S."/>
            <person name="Reed J."/>
            <person name="Reid J.F."/>
            <person name="Ring B.Z."/>
            <person name="Ringwald M."/>
            <person name="Rost B."/>
            <person name="Ruan Y."/>
            <person name="Salzberg S.L."/>
            <person name="Sandelin A."/>
            <person name="Schneider C."/>
            <person name="Schoenbach C."/>
            <person name="Sekiguchi K."/>
            <person name="Semple C.A."/>
            <person name="Seno S."/>
            <person name="Sessa L."/>
            <person name="Sheng Y."/>
            <person name="Shibata Y."/>
            <person name="Shimada H."/>
            <person name="Shimada K."/>
            <person name="Silva D."/>
            <person name="Sinclair B."/>
            <person name="Sperling S."/>
            <person name="Stupka E."/>
            <person name="Sugiura K."/>
            <person name="Sultana R."/>
            <person name="Takenaka Y."/>
            <person name="Taki K."/>
            <person name="Tammoja K."/>
            <person name="Tan S.L."/>
            <person name="Tang S."/>
            <person name="Taylor M.S."/>
            <person name="Tegner J."/>
            <person name="Teichmann S.A."/>
            <person name="Ueda H.R."/>
            <person name="van Nimwegen E."/>
            <person name="Verardo R."/>
            <person name="Wei C.L."/>
            <person name="Yagi K."/>
            <person name="Yamanishi H."/>
            <person name="Zabarovsky E."/>
            <person name="Zhu S."/>
            <person name="Zimmer A."/>
            <person name="Hide W."/>
            <person name="Bult C."/>
            <person name="Grimmond S.M."/>
            <person name="Teasdale R.D."/>
            <person name="Liu E.T."/>
            <person name="Brusic V."/>
            <person name="Quackenbush J."/>
            <person name="Wahlestedt C."/>
            <person name="Mattick J.S."/>
            <person name="Hume D.A."/>
            <person name="Kai C."/>
            <person name="Sasaki D."/>
            <person name="Tomaru Y."/>
            <person name="Fukuda S."/>
            <person name="Kanamori-Katayama M."/>
            <person name="Suzuki M."/>
            <person name="Aoki J."/>
            <person name="Arakawa T."/>
            <person name="Iida J."/>
            <person name="Imamura K."/>
            <person name="Itoh M."/>
            <person name="Kato T."/>
            <person name="Kawaji H."/>
            <person name="Kawagashira N."/>
            <person name="Kawashima T."/>
            <person name="Kojima M."/>
            <person name="Kondo S."/>
            <person name="Konno H."/>
            <person name="Nakano K."/>
            <person name="Ninomiya N."/>
            <person name="Nishio T."/>
            <person name="Okada M."/>
            <person name="Plessy C."/>
            <person name="Shibata K."/>
            <person name="Shiraki T."/>
            <person name="Suzuki S."/>
            <person name="Tagami M."/>
            <person name="Waki K."/>
            <person name="Watahiki A."/>
            <person name="Okamura-Oho Y."/>
            <person name="Suzuki H."/>
            <person name="Kawai J."/>
            <person name="Hayashizaki Y."/>
        </authorList>
    </citation>
    <scope>NUCLEOTIDE SEQUENCE [LARGE SCALE MRNA] OF 324-499</scope>
    <source>
        <strain>C57BL/6J</strain>
        <tissue>Egg</tissue>
    </source>
</reference>
<reference key="7">
    <citation type="journal article" date="2004" name="Dev. Growth Differ.">
        <title>Targeted disruption of the murine Plag1 proto-oncogene causes growth retardation and reduced fertility.</title>
        <authorList>
            <person name="Hensen K."/>
            <person name="Braem C."/>
            <person name="Declercq J."/>
            <person name="Van Dyck F."/>
            <person name="Dewerchin M."/>
            <person name="Fiette L."/>
            <person name="Denef C."/>
            <person name="Van de Ven W.J.M."/>
        </authorList>
    </citation>
    <scope>DISRUPTION PHENOTYPE</scope>
    <scope>DEVELOPMENTAL STAGE</scope>
</reference>
<reference key="8">
    <citation type="journal article" date="2004" name="Proc. Natl. Acad. Sci. U.S.A.">
        <title>Identification of genes that synergize with Cbfb-MYH11 in the pathogenesis of acute myeloid leukemia.</title>
        <authorList>
            <person name="Castilla L.H."/>
            <person name="Perrat P."/>
            <person name="Martinez N.J."/>
            <person name="Landrette S.F."/>
            <person name="Keys R."/>
            <person name="Oikemus S."/>
            <person name="Flanegan J."/>
            <person name="Heilman S."/>
            <person name="Garrett L."/>
            <person name="Dutra A."/>
            <person name="Anderson S."/>
            <person name="Pihan G.A."/>
            <person name="Wolff L."/>
            <person name="Liu P.P."/>
        </authorList>
    </citation>
    <scope>FUNCTION</scope>
    <scope>COOPERATION WITH CBFB-MYH11</scope>
</reference>
<reference key="9">
    <citation type="journal article" date="2005" name="Cancer Res.">
        <title>Salivary gland tumors in transgenic mice with targeted PLAG1 proto-oncogene overexpression.</title>
        <authorList>
            <person name="Declercq J."/>
            <person name="Van Dyck F."/>
            <person name="Braem C.V."/>
            <person name="Van Valckenborgh I.C."/>
            <person name="Voz M."/>
            <person name="Wassef M."/>
            <person name="Schoonjans L."/>
            <person name="Van Damme B."/>
            <person name="Fiette L."/>
            <person name="Van de Ven W.J.M."/>
        </authorList>
    </citation>
    <scope>TRANSGENIC MICE</scope>
    <scope>FUNCTION</scope>
</reference>
<reference key="10">
    <citation type="journal article" date="2005" name="Dev. Dyn.">
        <title>Members of the Plag gene family are expressed in complementary and overlapping regions in the developing murine nervous system.</title>
        <authorList>
            <person name="Alam S."/>
            <person name="Zinyk D."/>
            <person name="Ma L."/>
            <person name="Schuurmans C."/>
        </authorList>
    </citation>
    <scope>TISSUE SPECIFICITY</scope>
    <scope>DEVELOPMENTAL STAGE</scope>
</reference>
<reference key="11">
    <citation type="journal article" date="2006" name="Int. J. Cancer">
        <title>Wnt pathway is involved in pleomorphic adenomas induced by overexpression of PLAG1 in transgenic mice.</title>
        <authorList>
            <person name="Zhao X."/>
            <person name="Ren W."/>
            <person name="Yang W."/>
            <person name="Wang Y."/>
            <person name="Kong H."/>
            <person name="Wang L."/>
            <person name="Yan L."/>
            <person name="Xu G."/>
            <person name="Fei J."/>
            <person name="Fu J."/>
            <person name="Zhang C."/>
            <person name="Wang Z."/>
        </authorList>
    </citation>
    <scope>TRANSGENIC MICE</scope>
    <scope>FUNCTION</scope>
</reference>
<comment type="function">
    <text evidence="4 6 7">Transcription factor whose activation results in up-regulation of target genes, such as IGFII, leading to uncontrolled cell proliferation: when overexpressed in cultured cells, higher proliferation rate and transformation are observed. Other target genes such as CRLF1, CRABP2, CRIP2, PIGF are strongly induced in cells with PLAG1 induction. Proto-oncogene whose ectopic expression can trigger the development of pleomorphic adenomas of the salivary gland and lipoblastomas. Cooperates with CBFB-MYH11.</text>
</comment>
<comment type="subunit">
    <text evidence="1">Interacts with KPNA2, which escorts protein to the nucleus via interaction with nuclear localization signal. Interacts with E3 SUMO-protein ligase PIAS1, PIAS2 and PIAS4 (By similarity).</text>
</comment>
<comment type="subcellular location">
    <subcellularLocation>
        <location>Nucleus</location>
    </subcellularLocation>
    <text evidence="1">Strong nucleolar localization when sumoylation is inhibited.</text>
</comment>
<comment type="tissue specificity">
    <text evidence="8">Expressed in heart, spleen, lung, kidney, brain, testis and epididymis but not in salivary glands.</text>
</comment>
<comment type="developmental stage">
    <text evidence="5 8">High fetal expression with a strong decline after birth. Expressed at 9.5 dpc and 10.5 dpc in nervous system with highest level in telencephalon, diencephalon, and midbrain, as well as regionalized expression in the neural tube, which is characteristic of genes involved in the specification of neuronal fates.</text>
</comment>
<comment type="domain">
    <text evidence="1">C2H2-type zinc fingers 3 interacts with DNA-binding site G-clusterinc fingers. C2H2-type zinc fingers 6 and 7 interact with DNA-binding site core sequence (By similarity).</text>
</comment>
<comment type="PTM">
    <text evidence="1">Sumoylated with SUMO1; which inhibits transcriptional activity, but does not affect nuclear localization. Blockers of sumoylation pathway such as SENP3 and inactive UBE2I increases transcriptional capacity. Sumoylation is increased in the presence of PIAS1 (By similarity).</text>
</comment>
<comment type="PTM">
    <text evidence="1">Acetylated by lysine acetyltransferase EP300; which activates transcriptional capacity. Lysine residues that are sumoylated also seem to be target for acetylation (By similarity).</text>
</comment>
<comment type="disruption phenotype">
    <text evidence="5">Mice exhibit growth retardation with lower birth weight and disproportionally small seminal vesicles and ventral prostate as well as decreased fertility in both male and female. However, IGFII expression is normal in embryos.</text>
</comment>
<comment type="miscellaneous">
    <text>Mice overexpressing Plag1 develop normally with high Plag1 transgene expression in salivary glands, spleen and weak mammary gland detection. They develop salivary gland tumors with major pathological features of human pleimorphic adenomas at the age of 1-5 months.</text>
</comment>
<comment type="miscellaneous">
    <text>Mice with Plag1 overexpression targeted to salivary and mammary gland develop multifocal salivary gland tumors with pathological features of human pleimorphic adenomas at the age of 5 weeks, as well as mammary gland tumors at the age of 1 year. Plag1 overexpression in salivary gland are accompanied by increased IGFII expression. Besides features characteristic of benign pleimorphic adenomas, malignant characteristics are also observed in salivary gland tumors as well as metastasis to the lungs, reinforcing the tumorigenic role of Plag1.</text>
</comment>
<comment type="miscellaneous">
    <text>Neonate mice carrying a human myeloid leukemia translocation-associated fusion gene CBFB-MYH11, injected with a retrovirus (4070A), develop the pathology within 2-5 months due to few viral insertions in some genes, such as PLAG1. Insertions near the transcription start site of PLAG1 are predominant in the related tumors and probably participate in the transformation process. Plag1 is one candidate gene that can cooperate with CBFB-MYH11 for leukemogenesis in this mouse model.</text>
</comment>
<comment type="similarity">
    <text evidence="9">Belongs to the krueppel C2H2-type zinc-finger protein family.</text>
</comment>
<comment type="sequence caution" evidence="9">
    <conflict type="erroneous initiation">
        <sequence resource="EMBL-CDS" id="BAE22643"/>
    </conflict>
</comment>